<proteinExistence type="inferred from homology"/>
<dbReference type="EC" id="1.2.1.70" evidence="1"/>
<dbReference type="EMBL" id="CP001601">
    <property type="protein sequence ID" value="ACP31897.1"/>
    <property type="molecule type" value="Genomic_DNA"/>
</dbReference>
<dbReference type="RefSeq" id="WP_010189811.1">
    <property type="nucleotide sequence ID" value="NC_012590.1"/>
</dbReference>
<dbReference type="SMR" id="C3PKG1"/>
<dbReference type="STRING" id="548476.cauri_0298"/>
<dbReference type="GeneID" id="31922917"/>
<dbReference type="KEGG" id="car:cauri_0298"/>
<dbReference type="eggNOG" id="COG0373">
    <property type="taxonomic scope" value="Bacteria"/>
</dbReference>
<dbReference type="HOGENOM" id="CLU_035113_4_0_11"/>
<dbReference type="OrthoDB" id="110209at2"/>
<dbReference type="UniPathway" id="UPA00251">
    <property type="reaction ID" value="UER00316"/>
</dbReference>
<dbReference type="Proteomes" id="UP000002077">
    <property type="component" value="Chromosome"/>
</dbReference>
<dbReference type="GO" id="GO:0008883">
    <property type="term" value="F:glutamyl-tRNA reductase activity"/>
    <property type="evidence" value="ECO:0007669"/>
    <property type="project" value="UniProtKB-UniRule"/>
</dbReference>
<dbReference type="GO" id="GO:0050661">
    <property type="term" value="F:NADP binding"/>
    <property type="evidence" value="ECO:0007669"/>
    <property type="project" value="InterPro"/>
</dbReference>
<dbReference type="GO" id="GO:0019353">
    <property type="term" value="P:protoporphyrinogen IX biosynthetic process from glutamate"/>
    <property type="evidence" value="ECO:0007669"/>
    <property type="project" value="TreeGrafter"/>
</dbReference>
<dbReference type="CDD" id="cd05213">
    <property type="entry name" value="NAD_bind_Glutamyl_tRNA_reduct"/>
    <property type="match status" value="1"/>
</dbReference>
<dbReference type="FunFam" id="3.30.460.30:FF:000001">
    <property type="entry name" value="Glutamyl-tRNA reductase"/>
    <property type="match status" value="1"/>
</dbReference>
<dbReference type="Gene3D" id="3.30.460.30">
    <property type="entry name" value="Glutamyl-tRNA reductase, N-terminal domain"/>
    <property type="match status" value="1"/>
</dbReference>
<dbReference type="Gene3D" id="3.40.50.720">
    <property type="entry name" value="NAD(P)-binding Rossmann-like Domain"/>
    <property type="match status" value="1"/>
</dbReference>
<dbReference type="HAMAP" id="MF_00087">
    <property type="entry name" value="Glu_tRNA_reductase"/>
    <property type="match status" value="1"/>
</dbReference>
<dbReference type="InterPro" id="IPR000343">
    <property type="entry name" value="4pyrrol_synth_GluRdtase"/>
</dbReference>
<dbReference type="InterPro" id="IPR015896">
    <property type="entry name" value="4pyrrol_synth_GluRdtase_dimer"/>
</dbReference>
<dbReference type="InterPro" id="IPR015895">
    <property type="entry name" value="4pyrrol_synth_GluRdtase_N"/>
</dbReference>
<dbReference type="InterPro" id="IPR018214">
    <property type="entry name" value="GluRdtase_CS"/>
</dbReference>
<dbReference type="InterPro" id="IPR036453">
    <property type="entry name" value="GluRdtase_dimer_dom_sf"/>
</dbReference>
<dbReference type="InterPro" id="IPR036343">
    <property type="entry name" value="GluRdtase_N_sf"/>
</dbReference>
<dbReference type="InterPro" id="IPR036291">
    <property type="entry name" value="NAD(P)-bd_dom_sf"/>
</dbReference>
<dbReference type="InterPro" id="IPR006151">
    <property type="entry name" value="Shikm_DH/Glu-tRNA_Rdtase"/>
</dbReference>
<dbReference type="NCBIfam" id="TIGR01035">
    <property type="entry name" value="hemA"/>
    <property type="match status" value="1"/>
</dbReference>
<dbReference type="NCBIfam" id="NF000744">
    <property type="entry name" value="PRK00045.1-3"/>
    <property type="match status" value="1"/>
</dbReference>
<dbReference type="PANTHER" id="PTHR43013">
    <property type="entry name" value="GLUTAMYL-TRNA REDUCTASE"/>
    <property type="match status" value="1"/>
</dbReference>
<dbReference type="PANTHER" id="PTHR43013:SF1">
    <property type="entry name" value="GLUTAMYL-TRNA REDUCTASE"/>
    <property type="match status" value="1"/>
</dbReference>
<dbReference type="Pfam" id="PF00745">
    <property type="entry name" value="GlutR_dimer"/>
    <property type="match status" value="1"/>
</dbReference>
<dbReference type="Pfam" id="PF05201">
    <property type="entry name" value="GlutR_N"/>
    <property type="match status" value="1"/>
</dbReference>
<dbReference type="Pfam" id="PF01488">
    <property type="entry name" value="Shikimate_DH"/>
    <property type="match status" value="1"/>
</dbReference>
<dbReference type="PIRSF" id="PIRSF000445">
    <property type="entry name" value="4pyrrol_synth_GluRdtase"/>
    <property type="match status" value="1"/>
</dbReference>
<dbReference type="SUPFAM" id="SSF69742">
    <property type="entry name" value="Glutamyl tRNA-reductase catalytic, N-terminal domain"/>
    <property type="match status" value="1"/>
</dbReference>
<dbReference type="SUPFAM" id="SSF69075">
    <property type="entry name" value="Glutamyl tRNA-reductase dimerization domain"/>
    <property type="match status" value="1"/>
</dbReference>
<dbReference type="SUPFAM" id="SSF51735">
    <property type="entry name" value="NAD(P)-binding Rossmann-fold domains"/>
    <property type="match status" value="1"/>
</dbReference>
<dbReference type="PROSITE" id="PS00747">
    <property type="entry name" value="GLUTR"/>
    <property type="match status" value="1"/>
</dbReference>
<keyword id="KW-0521">NADP</keyword>
<keyword id="KW-0560">Oxidoreductase</keyword>
<keyword id="KW-0627">Porphyrin biosynthesis</keyword>
<keyword id="KW-1185">Reference proteome</keyword>
<organism>
    <name type="scientific">Corynebacterium aurimucosum (strain ATCC 700975 / DSM 44827 / CIP 107346 / CN-1)</name>
    <name type="common">Corynebacterium nigricans</name>
    <dbReference type="NCBI Taxonomy" id="548476"/>
    <lineage>
        <taxon>Bacteria</taxon>
        <taxon>Bacillati</taxon>
        <taxon>Actinomycetota</taxon>
        <taxon>Actinomycetes</taxon>
        <taxon>Mycobacteriales</taxon>
        <taxon>Corynebacteriaceae</taxon>
        <taxon>Corynebacterium</taxon>
    </lineage>
</organism>
<comment type="function">
    <text evidence="1">Catalyzes the NADPH-dependent reduction of glutamyl-tRNA(Glu) to glutamate 1-semialdehyde (GSA).</text>
</comment>
<comment type="catalytic activity">
    <reaction evidence="1">
        <text>(S)-4-amino-5-oxopentanoate + tRNA(Glu) + NADP(+) = L-glutamyl-tRNA(Glu) + NADPH + H(+)</text>
        <dbReference type="Rhea" id="RHEA:12344"/>
        <dbReference type="Rhea" id="RHEA-COMP:9663"/>
        <dbReference type="Rhea" id="RHEA-COMP:9680"/>
        <dbReference type="ChEBI" id="CHEBI:15378"/>
        <dbReference type="ChEBI" id="CHEBI:57501"/>
        <dbReference type="ChEBI" id="CHEBI:57783"/>
        <dbReference type="ChEBI" id="CHEBI:58349"/>
        <dbReference type="ChEBI" id="CHEBI:78442"/>
        <dbReference type="ChEBI" id="CHEBI:78520"/>
        <dbReference type="EC" id="1.2.1.70"/>
    </reaction>
</comment>
<comment type="pathway">
    <text evidence="1">Porphyrin-containing compound metabolism; protoporphyrin-IX biosynthesis; 5-aminolevulinate from L-glutamyl-tRNA(Glu): step 1/2.</text>
</comment>
<comment type="subunit">
    <text evidence="1">Homodimer.</text>
</comment>
<comment type="domain">
    <text evidence="1">Possesses an unusual extended V-shaped dimeric structure with each monomer consisting of three distinct domains arranged along a curved 'spinal' alpha-helix. The N-terminal catalytic domain specifically recognizes the glutamate moiety of the substrate. The second domain is the NADPH-binding domain, and the third C-terminal domain is responsible for dimerization.</text>
</comment>
<comment type="miscellaneous">
    <text evidence="1">During catalysis, the active site Cys acts as a nucleophile attacking the alpha-carbonyl group of tRNA-bound glutamate with the formation of a thioester intermediate between enzyme and glutamate, and the concomitant release of tRNA(Glu). The thioester intermediate is finally reduced by direct hydride transfer from NADPH, to form the product GSA.</text>
</comment>
<comment type="similarity">
    <text evidence="1">Belongs to the glutamyl-tRNA reductase family.</text>
</comment>
<name>HEM1_CORA7</name>
<feature type="chain" id="PRO_1000190514" description="Glutamyl-tRNA reductase">
    <location>
        <begin position="1"/>
        <end position="458"/>
    </location>
</feature>
<feature type="active site" description="Nucleophile" evidence="1">
    <location>
        <position position="50"/>
    </location>
</feature>
<feature type="binding site" evidence="1">
    <location>
        <begin position="49"/>
        <end position="52"/>
    </location>
    <ligand>
        <name>substrate</name>
    </ligand>
</feature>
<feature type="binding site" evidence="1">
    <location>
        <position position="109"/>
    </location>
    <ligand>
        <name>substrate</name>
    </ligand>
</feature>
<feature type="binding site" evidence="1">
    <location>
        <begin position="114"/>
        <end position="116"/>
    </location>
    <ligand>
        <name>substrate</name>
    </ligand>
</feature>
<feature type="binding site" evidence="1">
    <location>
        <position position="120"/>
    </location>
    <ligand>
        <name>substrate</name>
    </ligand>
</feature>
<feature type="binding site" evidence="1">
    <location>
        <begin position="191"/>
        <end position="196"/>
    </location>
    <ligand>
        <name>NADP(+)</name>
        <dbReference type="ChEBI" id="CHEBI:58349"/>
    </ligand>
</feature>
<feature type="site" description="Important for activity" evidence="1">
    <location>
        <position position="99"/>
    </location>
</feature>
<reference key="1">
    <citation type="journal article" date="2010" name="BMC Genomics">
        <title>Complete genome sequence and lifestyle of black-pigmented Corynebacterium aurimucosum ATCC 700975 (formerly C. nigricans CN-1) isolated from a vaginal swab of a woman with spontaneous abortion.</title>
        <authorList>
            <person name="Trost E."/>
            <person name="Gotker S."/>
            <person name="Schneider J."/>
            <person name="Schneiker-Bekel S."/>
            <person name="Szczepanowski R."/>
            <person name="Tilker A."/>
            <person name="Viehoever P."/>
            <person name="Arnold W."/>
            <person name="Bekel T."/>
            <person name="Blom J."/>
            <person name="Gartemann K.H."/>
            <person name="Linke B."/>
            <person name="Goesmann A."/>
            <person name="Puhler A."/>
            <person name="Shukla S.K."/>
            <person name="Tauch A."/>
        </authorList>
    </citation>
    <scope>NUCLEOTIDE SEQUENCE [LARGE SCALE GENOMIC DNA]</scope>
    <source>
        <strain>ATCC 700975 / DSM 44827 / CIP 107346 / CN-1</strain>
    </source>
</reference>
<accession>C3PKG1</accession>
<protein>
    <recommendedName>
        <fullName evidence="1">Glutamyl-tRNA reductase</fullName>
        <shortName evidence="1">GluTR</shortName>
        <ecNumber evidence="1">1.2.1.70</ecNumber>
    </recommendedName>
</protein>
<evidence type="ECO:0000255" key="1">
    <source>
        <dbReference type="HAMAP-Rule" id="MF_00087"/>
    </source>
</evidence>
<sequence>MSVLVVGMSHQSAPVALLEKLSMDETVQNDTCRAMVSAGSLSEAMIISTCNRLEVYTVTNSFHSGVQDVVHNLAEVSGVEEEKLRSYLYVRYADAAAEHLMMVTSGLDSMVVGEQQIIGQVRTAYQFASEQGTVGPRIHALAQSALRTGKRVHSETEIDEAGSSMVSFAFDQALSRMGREDLAGKRVLILGAGAMASLAATHAGRLGAHLIIANRTIARAERVAQHAHEAGVYADVIDFSERAQALRDVDVAISATGAQGFTITAADVERYHVADRELMLVDLSLPRDIDDAVAEAEGVDLINIERLNNSLQAADTDLAAGTSPHAQARRIVSEELESYASEQRVRDVVPAVSALRKRAANLVQCEVARMEQKHPELDERQMGDINRALKRVADKLLHEPTVRAKQLAANSGTVSHETALQELFGLQLEGSGVAVDMAELPDAAQMEAAENTKEEKDA</sequence>
<gene>
    <name evidence="1" type="primary">hemA</name>
    <name type="ordered locus">cauri_0298</name>
</gene>